<reference key="1">
    <citation type="journal article" date="1992" name="Nature">
        <title>The complete DNA sequence of yeast chromosome III.</title>
        <authorList>
            <person name="Oliver S.G."/>
            <person name="van der Aart Q.J.M."/>
            <person name="Agostoni-Carbone M.L."/>
            <person name="Aigle M."/>
            <person name="Alberghina L."/>
            <person name="Alexandraki D."/>
            <person name="Antoine G."/>
            <person name="Anwar R."/>
            <person name="Ballesta J.P.G."/>
            <person name="Benit P."/>
            <person name="Berben G."/>
            <person name="Bergantino E."/>
            <person name="Biteau N."/>
            <person name="Bolle P.-A."/>
            <person name="Bolotin-Fukuhara M."/>
            <person name="Brown A."/>
            <person name="Brown A.J.P."/>
            <person name="Buhler J.-M."/>
            <person name="Carcano C."/>
            <person name="Carignani G."/>
            <person name="Cederberg H."/>
            <person name="Chanet R."/>
            <person name="Contreras R."/>
            <person name="Crouzet M."/>
            <person name="Daignan-Fornier B."/>
            <person name="Defoor E."/>
            <person name="Delgado M.D."/>
            <person name="Demolder J."/>
            <person name="Doira C."/>
            <person name="Dubois E."/>
            <person name="Dujon B."/>
            <person name="Duesterhoeft A."/>
            <person name="Erdmann D."/>
            <person name="Esteban M."/>
            <person name="Fabre F."/>
            <person name="Fairhead C."/>
            <person name="Faye G."/>
            <person name="Feldmann H."/>
            <person name="Fiers W."/>
            <person name="Francingues-Gaillard M.-C."/>
            <person name="Franco L."/>
            <person name="Frontali L."/>
            <person name="Fukuhara H."/>
            <person name="Fuller L.J."/>
            <person name="Galland P."/>
            <person name="Gent M.E."/>
            <person name="Gigot D."/>
            <person name="Gilliquet V."/>
            <person name="Glansdorff N."/>
            <person name="Goffeau A."/>
            <person name="Grenson M."/>
            <person name="Grisanti P."/>
            <person name="Grivell L.A."/>
            <person name="de Haan M."/>
            <person name="Haasemann M."/>
            <person name="Hatat D."/>
            <person name="Hoenicka J."/>
            <person name="Hegemann J.H."/>
            <person name="Herbert C.J."/>
            <person name="Hilger F."/>
            <person name="Hohmann S."/>
            <person name="Hollenberg C.P."/>
            <person name="Huse K."/>
            <person name="Iborra F."/>
            <person name="Indge K.J."/>
            <person name="Isono K."/>
            <person name="Jacq C."/>
            <person name="Jacquet M."/>
            <person name="James C.M."/>
            <person name="Jauniaux J.-C."/>
            <person name="Jia Y."/>
            <person name="Jimenez A."/>
            <person name="Kelly A."/>
            <person name="Kleinhans U."/>
            <person name="Kreisl P."/>
            <person name="Lanfranchi G."/>
            <person name="Lewis C."/>
            <person name="van der Linden C.G."/>
            <person name="Lucchini G."/>
            <person name="Lutzenkirchen K."/>
            <person name="Maat M.J."/>
            <person name="Mallet L."/>
            <person name="Mannhaupt G."/>
            <person name="Martegani E."/>
            <person name="Mathieu A."/>
            <person name="Maurer C.T.C."/>
            <person name="McConnell D."/>
            <person name="McKee R.A."/>
            <person name="Messenguy F."/>
            <person name="Mewes H.-W."/>
            <person name="Molemans F."/>
            <person name="Montague M.A."/>
            <person name="Muzi Falconi M."/>
            <person name="Navas L."/>
            <person name="Newlon C.S."/>
            <person name="Noone D."/>
            <person name="Pallier C."/>
            <person name="Panzeri L."/>
            <person name="Pearson B.M."/>
            <person name="Perea J."/>
            <person name="Philippsen P."/>
            <person name="Pierard A."/>
            <person name="Planta R.J."/>
            <person name="Plevani P."/>
            <person name="Poetsch B."/>
            <person name="Pohl F.M."/>
            <person name="Purnelle B."/>
            <person name="Ramezani Rad M."/>
            <person name="Rasmussen S.W."/>
            <person name="Raynal A."/>
            <person name="Remacha M.A."/>
            <person name="Richterich P."/>
            <person name="Roberts A.B."/>
            <person name="Rodriguez F."/>
            <person name="Sanz E."/>
            <person name="Schaaff-Gerstenschlaeger I."/>
            <person name="Scherens B."/>
            <person name="Schweitzer B."/>
            <person name="Shu Y."/>
            <person name="Skala J."/>
            <person name="Slonimski P.P."/>
            <person name="Sor F."/>
            <person name="Soustelle C."/>
            <person name="Spiegelberg R."/>
            <person name="Stateva L.I."/>
            <person name="Steensma H.Y."/>
            <person name="Steiner S."/>
            <person name="Thierry A."/>
            <person name="Thireos G."/>
            <person name="Tzermia M."/>
            <person name="Urrestarazu L.A."/>
            <person name="Valle G."/>
            <person name="Vetter I."/>
            <person name="van Vliet-Reedijk J.C."/>
            <person name="Voet M."/>
            <person name="Volckaert G."/>
            <person name="Vreken P."/>
            <person name="Wang H."/>
            <person name="Warmington J.R."/>
            <person name="von Wettstein D."/>
            <person name="Wicksteed B.L."/>
            <person name="Wilson C."/>
            <person name="Wurst H."/>
            <person name="Xu G."/>
            <person name="Yoshikawa A."/>
            <person name="Zimmermann F.K."/>
            <person name="Sgouros J.G."/>
        </authorList>
    </citation>
    <scope>NUCLEOTIDE SEQUENCE [LARGE SCALE GENOMIC DNA]</scope>
    <source>
        <strain>ATCC 204508 / S288c</strain>
    </source>
</reference>
<reference key="2">
    <citation type="submission" date="1996-01" db="EMBL/GenBank/DDBJ databases">
        <authorList>
            <person name="Gromadka R."/>
        </authorList>
    </citation>
    <scope>SEQUENCE REVISION TO C-TERMINUS</scope>
</reference>
<reference key="3">
    <citation type="journal article" date="2014" name="G3 (Bethesda)">
        <title>The reference genome sequence of Saccharomyces cerevisiae: Then and now.</title>
        <authorList>
            <person name="Engel S.R."/>
            <person name="Dietrich F.S."/>
            <person name="Fisk D.G."/>
            <person name="Binkley G."/>
            <person name="Balakrishnan R."/>
            <person name="Costanzo M.C."/>
            <person name="Dwight S.S."/>
            <person name="Hitz B.C."/>
            <person name="Karra K."/>
            <person name="Nash R.S."/>
            <person name="Weng S."/>
            <person name="Wong E.D."/>
            <person name="Lloyd P."/>
            <person name="Skrzypek M.S."/>
            <person name="Miyasato S.R."/>
            <person name="Simison M."/>
            <person name="Cherry J.M."/>
        </authorList>
    </citation>
    <scope>GENOME REANNOTATION</scope>
    <source>
        <strain>ATCC 204508 / S288c</strain>
    </source>
</reference>
<reference key="4">
    <citation type="journal article" date="1992" name="Yeast">
        <title>Nucleotide sequence of D10B, a BamHI fragment on the small-ring chromosome III of Saccharomyces cerevisiae.</title>
        <authorList>
            <person name="Defoor E."/>
            <person name="Debrabandere R."/>
            <person name="Keyers B."/>
            <person name="Voet M."/>
            <person name="Volckaert G."/>
        </authorList>
    </citation>
    <scope>NUCLEOTIDE SEQUENCE [GENOMIC DNA] OF 1-214</scope>
</reference>
<reference key="5">
    <citation type="journal article" date="1999" name="Nucleic Acids Res.">
        <title>Spb1p is a putative methyltransferase required for 60S ribosomal subunit biogenesis in Saccharomyces cerevisiae.</title>
        <authorList>
            <person name="Kressler D."/>
            <person name="Rojo M."/>
            <person name="Linder P."/>
            <person name="de la Cruz J."/>
        </authorList>
    </citation>
    <scope>FUNCTION</scope>
</reference>
<reference key="6">
    <citation type="journal article" date="2000" name="Mol. Cell. Biol.">
        <title>Spb1p is a yeast nucleolar protein associated with Nop1p and Nop58p that is able to bind S-adenosyl-L-methionine in vitro.</title>
        <authorList>
            <person name="Pintard L."/>
            <person name="Kressler D."/>
            <person name="Lapeyre B."/>
        </authorList>
    </citation>
    <scope>BINDING TO S-ADENOSYL-L-METHIONINE</scope>
    <scope>INTERACTION WITH NOP1 AND NOP58</scope>
    <scope>SUBCELLULAR LOCATION</scope>
</reference>
<reference key="7">
    <citation type="journal article" date="2002" name="EMBO J.">
        <title>60S pre-ribosome formation viewed from assembly in the nucleolus until export to the cytoplasm.</title>
        <authorList>
            <person name="Nissan T.A."/>
            <person name="Bassler J."/>
            <person name="Petfalski E."/>
            <person name="Tollervey D."/>
            <person name="Hurt E."/>
        </authorList>
    </citation>
    <scope>IDENTIFICATION IN THE PRE-60S RIBOSOMAL PARTICLE</scope>
    <scope>IDENTIFICATION BY MASS SPECTROMETRY</scope>
</reference>
<reference key="8">
    <citation type="journal article" date="2003" name="Mol. Cell">
        <title>Functional redundancy of Spb1p and a snR52-dependent mechanism for the 2'-O-ribose methylation of a conserved rRNA position in yeast.</title>
        <authorList>
            <person name="Bonnerot C."/>
            <person name="Pintard L."/>
            <person name="Lutfalla G."/>
        </authorList>
    </citation>
    <scope>FUNCTION</scope>
    <scope>CATALYTIC ACTIVITY</scope>
    <scope>MUTAGENESIS OF ASP-52</scope>
</reference>
<reference key="9">
    <citation type="journal article" date="2004" name="Mol. Cell">
        <title>Spb1p-directed formation of Gm2922 in the ribosome catalytic center occurs at a late processing stage.</title>
        <authorList>
            <person name="Lapeyre B."/>
            <person name="Purushothaman S.K."/>
        </authorList>
    </citation>
    <scope>FUNCTION</scope>
</reference>
<reference key="10">
    <citation type="journal article" date="2007" name="J. Proteome Res.">
        <title>Large-scale phosphorylation analysis of alpha-factor-arrested Saccharomyces cerevisiae.</title>
        <authorList>
            <person name="Li X."/>
            <person name="Gerber S.A."/>
            <person name="Rudner A.D."/>
            <person name="Beausoleil S.A."/>
            <person name="Haas W."/>
            <person name="Villen J."/>
            <person name="Elias J.E."/>
            <person name="Gygi S.P."/>
        </authorList>
    </citation>
    <scope>PHOSPHORYLATION [LARGE SCALE ANALYSIS] AT SER-455 AND SER-529</scope>
    <scope>IDENTIFICATION BY MASS SPECTROMETRY [LARGE SCALE ANALYSIS]</scope>
    <source>
        <strain>ADR376</strain>
    </source>
</reference>
<reference key="11">
    <citation type="journal article" date="2008" name="Mol. Cell. Proteomics">
        <title>A multidimensional chromatography technology for in-depth phosphoproteome analysis.</title>
        <authorList>
            <person name="Albuquerque C.P."/>
            <person name="Smolka M.B."/>
            <person name="Payne S.H."/>
            <person name="Bafna V."/>
            <person name="Eng J."/>
            <person name="Zhou H."/>
        </authorList>
    </citation>
    <scope>PHOSPHORYLATION [LARGE SCALE ANALYSIS] AT SER-529</scope>
    <scope>IDENTIFICATION BY MASS SPECTROMETRY [LARGE SCALE ANALYSIS]</scope>
</reference>
<reference key="12">
    <citation type="journal article" date="2009" name="Science">
        <title>Global analysis of Cdk1 substrate phosphorylation sites provides insights into evolution.</title>
        <authorList>
            <person name="Holt L.J."/>
            <person name="Tuch B.B."/>
            <person name="Villen J."/>
            <person name="Johnson A.D."/>
            <person name="Gygi S.P."/>
            <person name="Morgan D.O."/>
        </authorList>
    </citation>
    <scope>PHOSPHORYLATION [LARGE SCALE ANALYSIS] AT SER-455; SER-464 AND SER-529</scope>
    <scope>IDENTIFICATION BY MASS SPECTROMETRY [LARGE SCALE ANALYSIS]</scope>
</reference>
<keyword id="KW-0002">3D-structure</keyword>
<keyword id="KW-0175">Coiled coil</keyword>
<keyword id="KW-0489">Methyltransferase</keyword>
<keyword id="KW-0539">Nucleus</keyword>
<keyword id="KW-0597">Phosphoprotein</keyword>
<keyword id="KW-1185">Reference proteome</keyword>
<keyword id="KW-0690">Ribosome biogenesis</keyword>
<keyword id="KW-0698">rRNA processing</keyword>
<keyword id="KW-0949">S-adenosyl-L-methionine</keyword>
<keyword id="KW-0808">Transferase</keyword>
<accession>P25582</accession>
<accession>D6VQW3</accession>
<sequence length="841" mass="96485">MGKTQKKNSKGRLDRYYYLAKEKGYRARSSFKIIQINEKYGHFLEKSKVVIDLCAAPGSWCQVASKLCPVNSLIIGVDIVPMKPMPNVITFQSDITTEDCRSKLRGYMKTWKADTVLHDGAPNVGLGWVQDAFTQSQLTLQALKLAVENLVVNGTFVTKIFRSKDYNKLIWVFQQLFEKVEATKPPASRNVSAEIFVVCKGFKAPKRLDPRLLDPKEVFEELPDGQQNMESKIYNPEKKVRKRQGYEEGDNLLYHETSILDFVRTEDPISMLGEMNKFTIDENDHEWKILKKLKQTTDEFRSCIEDLKVLGKKDFKMILRWRKIAREILGIEVKDDAKTEIEVVPLTEEEQIEKDLQGLQEKQRLNVKRERRRKNEMKQKELQRMQMNMITPTDIGIEAASLGKESLFNLKTAEKTGILNDLAKGKKRMIFTDDELAKDNDIYIDENIMIKDKDSAADADDLESELNAMYSDYKTRRSERDAKFRAKQARGGDNEEEWTGFNEGSLEKKEEEGKDYIEDNDDEGVEGDSDDDEAITNLISKLKGQEGDHKLSSKARMIFNDPIFNNVEPDLPVNTVNDGIMSSESVGDISKLNKKRKHEEMHQKQDEADSSDESSSDDSDFEIVANDNASEEFDSDYDSEEEKNQTKKEKHSRDIDIATVEAMTLAHQLALGQKNKHDLVDEGFNRYTFRDTENLPDWFLEDEKEHSKINKPITKEAAMAIKEKIKAMNARPIKKVAEAKARKRMRAVARLEKIKKKAGLINDDSDKTEKDKAEEISRLMRKVTKKPKTKPKVTLVVASGRNKGLAGRPKGVKGKYKMVDGVMKNEQRALRRIAKKHHKKK</sequence>
<dbReference type="EC" id="2.1.1.167"/>
<dbReference type="EMBL" id="X59720">
    <property type="protein sequence ID" value="CAA42391.1"/>
    <property type="molecule type" value="Genomic_DNA"/>
</dbReference>
<dbReference type="EMBL" id="BK006937">
    <property type="protein sequence ID" value="DAA07432.1"/>
    <property type="molecule type" value="Genomic_DNA"/>
</dbReference>
<dbReference type="PIR" id="S74280">
    <property type="entry name" value="S74280"/>
</dbReference>
<dbReference type="RefSeq" id="NP_009877.1">
    <property type="nucleotide sequence ID" value="NM_001178698.1"/>
</dbReference>
<dbReference type="PDB" id="6ELZ">
    <property type="method" value="EM"/>
    <property type="resolution" value="3.30 A"/>
    <property type="chains" value="w=1-841"/>
</dbReference>
<dbReference type="PDB" id="6EM5">
    <property type="method" value="EM"/>
    <property type="resolution" value="4.30 A"/>
    <property type="chains" value="w=1-841"/>
</dbReference>
<dbReference type="PDB" id="6YLX">
    <property type="method" value="EM"/>
    <property type="resolution" value="3.90 A"/>
    <property type="chains" value="w=1-841"/>
</dbReference>
<dbReference type="PDB" id="7NAC">
    <property type="method" value="EM"/>
    <property type="resolution" value="3.04 A"/>
    <property type="chains" value="w=1-841"/>
</dbReference>
<dbReference type="PDB" id="7NAD">
    <property type="method" value="EM"/>
    <property type="resolution" value="3.04 A"/>
    <property type="chains" value="w=1-841"/>
</dbReference>
<dbReference type="PDB" id="7NAF">
    <property type="method" value="EM"/>
    <property type="resolution" value="3.13 A"/>
    <property type="chains" value="w=1-389"/>
</dbReference>
<dbReference type="PDB" id="7OHR">
    <property type="method" value="EM"/>
    <property type="resolution" value="4.72 A"/>
    <property type="chains" value="w=1-841"/>
</dbReference>
<dbReference type="PDB" id="7OHV">
    <property type="method" value="EM"/>
    <property type="resolution" value="3.90 A"/>
    <property type="chains" value="w=1-841"/>
</dbReference>
<dbReference type="PDB" id="7R6K">
    <property type="method" value="EM"/>
    <property type="resolution" value="3.17 A"/>
    <property type="chains" value="w=1-841"/>
</dbReference>
<dbReference type="PDB" id="7R6Q">
    <property type="method" value="EM"/>
    <property type="resolution" value="2.98 A"/>
    <property type="chains" value="w=449-514"/>
</dbReference>
<dbReference type="PDB" id="7R72">
    <property type="method" value="EM"/>
    <property type="resolution" value="3.07 A"/>
    <property type="chains" value="w=1-841"/>
</dbReference>
<dbReference type="PDB" id="7R7A">
    <property type="method" value="EM"/>
    <property type="resolution" value="3.04 A"/>
    <property type="chains" value="w=1-841"/>
</dbReference>
<dbReference type="PDB" id="7R7C">
    <property type="method" value="EM"/>
    <property type="resolution" value="3.71 A"/>
    <property type="chains" value="w=827-838"/>
</dbReference>
<dbReference type="PDB" id="7R7O">
    <property type="method" value="X-ray"/>
    <property type="resolution" value="1.58 A"/>
    <property type="chains" value="A/B=1-220"/>
</dbReference>
<dbReference type="PDB" id="7U0H">
    <property type="method" value="EM"/>
    <property type="resolution" value="2.76 A"/>
    <property type="chains" value="w=1-841"/>
</dbReference>
<dbReference type="PDB" id="8V87">
    <property type="method" value="EM"/>
    <property type="resolution" value="2.66 A"/>
    <property type="chains" value="w=1-841"/>
</dbReference>
<dbReference type="PDBsum" id="6ELZ"/>
<dbReference type="PDBsum" id="6EM5"/>
<dbReference type="PDBsum" id="6YLX"/>
<dbReference type="PDBsum" id="7NAC"/>
<dbReference type="PDBsum" id="7NAD"/>
<dbReference type="PDBsum" id="7NAF"/>
<dbReference type="PDBsum" id="7OHR"/>
<dbReference type="PDBsum" id="7OHV"/>
<dbReference type="PDBsum" id="7R6K"/>
<dbReference type="PDBsum" id="7R6Q"/>
<dbReference type="PDBsum" id="7R72"/>
<dbReference type="PDBsum" id="7R7A"/>
<dbReference type="PDBsum" id="7R7C"/>
<dbReference type="PDBsum" id="7R7O"/>
<dbReference type="PDBsum" id="7U0H"/>
<dbReference type="PDBsum" id="8V87"/>
<dbReference type="EMDB" id="EMD-10841"/>
<dbReference type="EMDB" id="EMD-12906"/>
<dbReference type="EMDB" id="EMD-12910"/>
<dbReference type="EMDB" id="EMD-24269"/>
<dbReference type="EMDB" id="EMD-24271"/>
<dbReference type="EMDB" id="EMD-24280"/>
<dbReference type="EMDB" id="EMD-24290"/>
<dbReference type="EMDB" id="EMD-24296"/>
<dbReference type="EMDB" id="EMD-24297"/>
<dbReference type="EMDB" id="EMD-26259"/>
<dbReference type="EMDB" id="EMD-43027"/>
<dbReference type="SMR" id="P25582"/>
<dbReference type="BioGRID" id="30932">
    <property type="interactions" value="144"/>
</dbReference>
<dbReference type="DIP" id="DIP-1777N"/>
<dbReference type="FunCoup" id="P25582">
    <property type="interactions" value="1374"/>
</dbReference>
<dbReference type="IntAct" id="P25582">
    <property type="interactions" value="71"/>
</dbReference>
<dbReference type="MINT" id="P25582"/>
<dbReference type="STRING" id="4932.YCL054W"/>
<dbReference type="iPTMnet" id="P25582"/>
<dbReference type="PaxDb" id="4932-YCL054W"/>
<dbReference type="PeptideAtlas" id="P25582"/>
<dbReference type="EnsemblFungi" id="YCL054W_mRNA">
    <property type="protein sequence ID" value="YCL054W"/>
    <property type="gene ID" value="YCL054W"/>
</dbReference>
<dbReference type="GeneID" id="850304"/>
<dbReference type="KEGG" id="sce:YCL054W"/>
<dbReference type="AGR" id="SGD:S000000559"/>
<dbReference type="SGD" id="S000000559">
    <property type="gene designation" value="SPB1"/>
</dbReference>
<dbReference type="VEuPathDB" id="FungiDB:YCL054W"/>
<dbReference type="eggNOG" id="KOG1098">
    <property type="taxonomic scope" value="Eukaryota"/>
</dbReference>
<dbReference type="GeneTree" id="ENSGT00550000075004"/>
<dbReference type="HOGENOM" id="CLU_009422_8_1_1"/>
<dbReference type="InParanoid" id="P25582"/>
<dbReference type="OMA" id="QRKDKYY"/>
<dbReference type="OrthoDB" id="1287559at2759"/>
<dbReference type="BioCyc" id="YEAST:YCL054W-MONOMER"/>
<dbReference type="BRENDA" id="2.1.1.167">
    <property type="organism ID" value="984"/>
</dbReference>
<dbReference type="BioGRID-ORCS" id="850304">
    <property type="hits" value="1 hit in 10 CRISPR screens"/>
</dbReference>
<dbReference type="PRO" id="PR:P25582"/>
<dbReference type="Proteomes" id="UP000002311">
    <property type="component" value="Chromosome III"/>
</dbReference>
<dbReference type="RNAct" id="P25582">
    <property type="molecule type" value="protein"/>
</dbReference>
<dbReference type="GO" id="GO:0005730">
    <property type="term" value="C:nucleolus"/>
    <property type="evidence" value="ECO:0000314"/>
    <property type="project" value="SGD"/>
</dbReference>
<dbReference type="GO" id="GO:0005634">
    <property type="term" value="C:nucleus"/>
    <property type="evidence" value="ECO:0000314"/>
    <property type="project" value="SGD"/>
</dbReference>
<dbReference type="GO" id="GO:0030687">
    <property type="term" value="C:preribosome, large subunit precursor"/>
    <property type="evidence" value="ECO:0000314"/>
    <property type="project" value="SGD"/>
</dbReference>
<dbReference type="GO" id="GO:0016435">
    <property type="term" value="F:rRNA (guanine) methyltransferase activity"/>
    <property type="evidence" value="ECO:0000315"/>
    <property type="project" value="SGD"/>
</dbReference>
<dbReference type="GO" id="GO:0070039">
    <property type="term" value="F:rRNA (guanosine-2'-O-)-methyltransferase activity"/>
    <property type="evidence" value="ECO:0007669"/>
    <property type="project" value="UniProtKB-UniRule"/>
</dbReference>
<dbReference type="GO" id="GO:0008650">
    <property type="term" value="F:rRNA (uridine-2'-O-)-methyltransferase activity"/>
    <property type="evidence" value="ECO:0000316"/>
    <property type="project" value="SGD"/>
</dbReference>
<dbReference type="GO" id="GO:0000466">
    <property type="term" value="P:maturation of 5.8S rRNA from tricistronic rRNA transcript (SSU-rRNA, 5.8S rRNA, LSU-rRNA)"/>
    <property type="evidence" value="ECO:0000315"/>
    <property type="project" value="SGD"/>
</dbReference>
<dbReference type="GO" id="GO:0000463">
    <property type="term" value="P:maturation of LSU-rRNA from tricistronic rRNA transcript (SSU-rRNA, 5.8S rRNA, LSU-rRNA)"/>
    <property type="evidence" value="ECO:0000315"/>
    <property type="project" value="SGD"/>
</dbReference>
<dbReference type="GO" id="GO:0031167">
    <property type="term" value="P:rRNA methylation"/>
    <property type="evidence" value="ECO:0000314"/>
    <property type="project" value="SGD"/>
</dbReference>
<dbReference type="FunFam" id="3.40.50.150:FF:000004">
    <property type="entry name" value="AdoMet-dependent rRNA methyltransferase SPB1"/>
    <property type="match status" value="1"/>
</dbReference>
<dbReference type="Gene3D" id="3.40.50.150">
    <property type="entry name" value="Vaccinia Virus protein VP39"/>
    <property type="match status" value="1"/>
</dbReference>
<dbReference type="HAMAP" id="MF_01547">
    <property type="entry name" value="RNA_methyltr_E"/>
    <property type="match status" value="1"/>
</dbReference>
<dbReference type="HAMAP" id="MF_03163">
    <property type="entry name" value="RNA_methyltr_E_SPB1"/>
    <property type="match status" value="1"/>
</dbReference>
<dbReference type="InterPro" id="IPR050082">
    <property type="entry name" value="RNA_methyltr_RlmE"/>
</dbReference>
<dbReference type="InterPro" id="IPR002877">
    <property type="entry name" value="RNA_MeTrfase_FtsJ_dom"/>
</dbReference>
<dbReference type="InterPro" id="IPR015507">
    <property type="entry name" value="rRNA-MeTfrase_E"/>
</dbReference>
<dbReference type="InterPro" id="IPR012920">
    <property type="entry name" value="rRNA_MeTfrase_SPB1-like_C"/>
</dbReference>
<dbReference type="InterPro" id="IPR024576">
    <property type="entry name" value="rRNA_MeTfrase_Spb1_DUF3381"/>
</dbReference>
<dbReference type="InterPro" id="IPR029063">
    <property type="entry name" value="SAM-dependent_MTases_sf"/>
</dbReference>
<dbReference type="InterPro" id="IPR028589">
    <property type="entry name" value="SPB1-like"/>
</dbReference>
<dbReference type="PANTHER" id="PTHR10920:SF13">
    <property type="entry name" value="PRE-RRNA 2'-O-RIBOSE RNA METHYLTRANSFERASE FTSJ3"/>
    <property type="match status" value="1"/>
</dbReference>
<dbReference type="PANTHER" id="PTHR10920">
    <property type="entry name" value="RIBOSOMAL RNA METHYLTRANSFERASE"/>
    <property type="match status" value="1"/>
</dbReference>
<dbReference type="Pfam" id="PF11861">
    <property type="entry name" value="DUF3381"/>
    <property type="match status" value="1"/>
</dbReference>
<dbReference type="Pfam" id="PF01728">
    <property type="entry name" value="FtsJ"/>
    <property type="match status" value="1"/>
</dbReference>
<dbReference type="Pfam" id="PF07780">
    <property type="entry name" value="Spb1_C"/>
    <property type="match status" value="1"/>
</dbReference>
<dbReference type="SUPFAM" id="SSF53335">
    <property type="entry name" value="S-adenosyl-L-methionine-dependent methyltransferases"/>
    <property type="match status" value="1"/>
</dbReference>
<feature type="chain" id="PRO_0000155604" description="27S pre-rRNA (guanosine(2922)-2'-O)-methyltransferase">
    <location>
        <begin position="1"/>
        <end position="841"/>
    </location>
</feature>
<feature type="region of interest" description="Disordered" evidence="2">
    <location>
        <begin position="480"/>
        <end position="534"/>
    </location>
</feature>
<feature type="region of interest" description="Disordered" evidence="2">
    <location>
        <begin position="565"/>
        <end position="654"/>
    </location>
</feature>
<feature type="coiled-coil region" evidence="1">
    <location>
        <begin position="360"/>
        <end position="389"/>
    </location>
</feature>
<feature type="compositionally biased region" description="Basic and acidic residues" evidence="2">
    <location>
        <begin position="505"/>
        <end position="517"/>
    </location>
</feature>
<feature type="compositionally biased region" description="Acidic residues" evidence="2">
    <location>
        <begin position="518"/>
        <end position="534"/>
    </location>
</feature>
<feature type="compositionally biased region" description="Polar residues" evidence="2">
    <location>
        <begin position="574"/>
        <end position="585"/>
    </location>
</feature>
<feature type="compositionally biased region" description="Basic and acidic residues" evidence="2">
    <location>
        <begin position="598"/>
        <end position="607"/>
    </location>
</feature>
<feature type="compositionally biased region" description="Acidic residues" evidence="2">
    <location>
        <begin position="608"/>
        <end position="621"/>
    </location>
</feature>
<feature type="compositionally biased region" description="Acidic residues" evidence="2">
    <location>
        <begin position="629"/>
        <end position="641"/>
    </location>
</feature>
<feature type="compositionally biased region" description="Basic and acidic residues" evidence="2">
    <location>
        <begin position="642"/>
        <end position="654"/>
    </location>
</feature>
<feature type="active site" description="Proton acceptor" evidence="1">
    <location>
        <position position="159"/>
    </location>
</feature>
<feature type="binding site" evidence="1">
    <location>
        <position position="58"/>
    </location>
    <ligand>
        <name>S-adenosyl-L-methionine</name>
        <dbReference type="ChEBI" id="CHEBI:59789"/>
    </ligand>
</feature>
<feature type="binding site" evidence="1">
    <location>
        <position position="60"/>
    </location>
    <ligand>
        <name>S-adenosyl-L-methionine</name>
        <dbReference type="ChEBI" id="CHEBI:59789"/>
    </ligand>
</feature>
<feature type="binding site" evidence="1">
    <location>
        <position position="78"/>
    </location>
    <ligand>
        <name>S-adenosyl-L-methionine</name>
        <dbReference type="ChEBI" id="CHEBI:59789"/>
    </ligand>
</feature>
<feature type="binding site" evidence="1">
    <location>
        <position position="94"/>
    </location>
    <ligand>
        <name>S-adenosyl-L-methionine</name>
        <dbReference type="ChEBI" id="CHEBI:59789"/>
    </ligand>
</feature>
<feature type="binding site" evidence="1">
    <location>
        <position position="119"/>
    </location>
    <ligand>
        <name>S-adenosyl-L-methionine</name>
        <dbReference type="ChEBI" id="CHEBI:59789"/>
    </ligand>
</feature>
<feature type="modified residue" description="Phosphoserine" evidence="8 10">
    <location>
        <position position="455"/>
    </location>
</feature>
<feature type="modified residue" description="Phosphoserine" evidence="10">
    <location>
        <position position="464"/>
    </location>
</feature>
<feature type="modified residue" description="Phosphoserine" evidence="8 9 10">
    <location>
        <position position="529"/>
    </location>
</feature>
<feature type="mutagenesis site" description="Abolishes methyltransferase activity." evidence="6">
    <original>D</original>
    <variation>A</variation>
    <location>
        <position position="52"/>
    </location>
</feature>
<feature type="helix" evidence="12">
    <location>
        <begin position="6"/>
        <end position="8"/>
    </location>
</feature>
<feature type="turn" evidence="11">
    <location>
        <begin position="10"/>
        <end position="12"/>
    </location>
</feature>
<feature type="helix" evidence="15">
    <location>
        <begin position="15"/>
        <end position="23"/>
    </location>
</feature>
<feature type="helix" evidence="15">
    <location>
        <begin position="30"/>
        <end position="39"/>
    </location>
</feature>
<feature type="helix" evidence="15">
    <location>
        <begin position="44"/>
        <end position="46"/>
    </location>
</feature>
<feature type="strand" evidence="15">
    <location>
        <begin position="48"/>
        <end position="54"/>
    </location>
</feature>
<feature type="helix" evidence="15">
    <location>
        <begin position="59"/>
        <end position="67"/>
    </location>
</feature>
<feature type="strand" evidence="15">
    <location>
        <begin position="73"/>
        <end position="80"/>
    </location>
</feature>
<feature type="strand" evidence="15">
    <location>
        <begin position="88"/>
        <end position="92"/>
    </location>
</feature>
<feature type="strand" evidence="12">
    <location>
        <begin position="95"/>
        <end position="97"/>
    </location>
</feature>
<feature type="helix" evidence="15">
    <location>
        <begin position="98"/>
        <end position="108"/>
    </location>
</feature>
<feature type="strand" evidence="15">
    <location>
        <begin position="113"/>
        <end position="118"/>
    </location>
</feature>
<feature type="helix" evidence="15">
    <location>
        <begin position="128"/>
        <end position="149"/>
    </location>
</feature>
<feature type="strand" evidence="15">
    <location>
        <begin position="150"/>
        <end position="161"/>
    </location>
</feature>
<feature type="helix" evidence="15">
    <location>
        <begin position="166"/>
        <end position="176"/>
    </location>
</feature>
<feature type="strand" evidence="15">
    <location>
        <begin position="177"/>
        <end position="183"/>
    </location>
</feature>
<feature type="helix" evidence="15">
    <location>
        <begin position="186"/>
        <end position="188"/>
    </location>
</feature>
<feature type="strand" evidence="15">
    <location>
        <begin position="194"/>
        <end position="202"/>
    </location>
</feature>
<feature type="strand" evidence="12">
    <location>
        <begin position="205"/>
        <end position="208"/>
    </location>
</feature>
<feature type="helix" evidence="15">
    <location>
        <begin position="211"/>
        <end position="213"/>
    </location>
</feature>
<feature type="helix" evidence="15">
    <location>
        <begin position="215"/>
        <end position="218"/>
    </location>
</feature>
<feature type="helix" evidence="12">
    <location>
        <begin position="230"/>
        <end position="233"/>
    </location>
</feature>
<feature type="strand" evidence="12">
    <location>
        <begin position="256"/>
        <end position="258"/>
    </location>
</feature>
<feature type="helix" evidence="12">
    <location>
        <begin position="259"/>
        <end position="264"/>
    </location>
</feature>
<feature type="helix" evidence="12">
    <location>
        <begin position="268"/>
        <end position="272"/>
    </location>
</feature>
<feature type="strand" evidence="12">
    <location>
        <begin position="276"/>
        <end position="279"/>
    </location>
</feature>
<feature type="helix" evidence="12">
    <location>
        <begin position="285"/>
        <end position="291"/>
    </location>
</feature>
<feature type="strand" evidence="12">
    <location>
        <begin position="292"/>
        <end position="296"/>
    </location>
</feature>
<feature type="helix" evidence="12">
    <location>
        <begin position="301"/>
        <end position="304"/>
    </location>
</feature>
<feature type="helix" evidence="12">
    <location>
        <begin position="312"/>
        <end position="328"/>
    </location>
</feature>
<feature type="helix" evidence="11">
    <location>
        <begin position="349"/>
        <end position="387"/>
    </location>
</feature>
<feature type="helix" evidence="11">
    <location>
        <begin position="410"/>
        <end position="415"/>
    </location>
</feature>
<feature type="helix" evidence="11">
    <location>
        <begin position="420"/>
        <end position="424"/>
    </location>
</feature>
<feature type="helix" evidence="14">
    <location>
        <begin position="457"/>
        <end position="478"/>
    </location>
</feature>
<feature type="turn" evidence="14">
    <location>
        <begin position="482"/>
        <end position="484"/>
    </location>
</feature>
<feature type="helix" evidence="14">
    <location>
        <begin position="487"/>
        <end position="489"/>
    </location>
</feature>
<feature type="strand" evidence="14">
    <location>
        <begin position="499"/>
        <end position="501"/>
    </location>
</feature>
<feature type="helix" evidence="14">
    <location>
        <begin position="503"/>
        <end position="509"/>
    </location>
</feature>
<feature type="helix" evidence="14">
    <location>
        <begin position="510"/>
        <end position="512"/>
    </location>
</feature>
<feature type="helix" evidence="11">
    <location>
        <begin position="553"/>
        <end position="559"/>
    </location>
</feature>
<feature type="strand" evidence="11">
    <location>
        <begin position="564"/>
        <end position="566"/>
    </location>
</feature>
<feature type="helix" evidence="11">
    <location>
        <begin position="639"/>
        <end position="651"/>
    </location>
</feature>
<feature type="helix" evidence="13">
    <location>
        <begin position="660"/>
        <end position="670"/>
    </location>
</feature>
<feature type="helix" evidence="13">
    <location>
        <begin position="676"/>
        <end position="682"/>
    </location>
</feature>
<feature type="strand" evidence="13">
    <location>
        <begin position="693"/>
        <end position="695"/>
    </location>
</feature>
<feature type="helix" evidence="11">
    <location>
        <begin position="697"/>
        <end position="700"/>
    </location>
</feature>
<feature type="turn" evidence="13">
    <location>
        <begin position="704"/>
        <end position="706"/>
    </location>
</feature>
<feature type="helix" evidence="13">
    <location>
        <begin position="715"/>
        <end position="724"/>
    </location>
</feature>
<feature type="helix" evidence="13">
    <location>
        <begin position="733"/>
        <end position="758"/>
    </location>
</feature>
<comment type="function">
    <text evidence="1 3 6 7">Required for proper assembly of pre-ribosomal particles during the biogenesis of the 60S ribosomal subunit. Specifically methylates the guanosine in position 2922 of the 25S rRNA at the stage of 27S pre-rRNA maturation. Also methylates the uridine in position 2921 in the absence of methylation of this residue guided by snoRNA snR52 at the stage of 35S pre-rRNA maturation.</text>
</comment>
<comment type="catalytic activity">
    <reaction evidence="6">
        <text>guanosine(2922) in 27S pre-rRNA + S-adenosyl-L-methionine = 2'-O-methylguanosine(2922) in 27S pre-rRNA + S-adenosyl-L-homocysteine + H(+)</text>
        <dbReference type="Rhea" id="RHEA:42724"/>
        <dbReference type="Rhea" id="RHEA-COMP:10200"/>
        <dbReference type="Rhea" id="RHEA-COMP:10201"/>
        <dbReference type="ChEBI" id="CHEBI:15378"/>
        <dbReference type="ChEBI" id="CHEBI:57856"/>
        <dbReference type="ChEBI" id="CHEBI:59789"/>
        <dbReference type="ChEBI" id="CHEBI:74269"/>
        <dbReference type="ChEBI" id="CHEBI:74445"/>
        <dbReference type="EC" id="2.1.1.167"/>
    </reaction>
</comment>
<comment type="subunit">
    <text evidence="1 4 5">Component of the nucleolar and nucleoplasmic pre-60S ribosomal particle. Interacts with the snoRNA-associated proteins NOP1 and NOP58.</text>
</comment>
<comment type="interaction">
    <interactant intactId="EBI-17814">
        <id>P25582</id>
    </interactant>
    <interactant intactId="EBI-5644">
        <id>Q12389</id>
        <label>DBP10</label>
    </interactant>
    <organismsDiffer>false</organismsDiffer>
    <experiments>3</experiments>
</comment>
<comment type="interaction">
    <interactant intactId="EBI-17814">
        <id>P25582</id>
    </interactant>
    <interactant intactId="EBI-6289">
        <id>P36049</id>
        <label>EBP2</label>
    </interactant>
    <organismsDiffer>false</organismsDiffer>
    <experiments>3</experiments>
</comment>
<comment type="interaction">
    <interactant intactId="EBI-17814">
        <id>P25582</id>
    </interactant>
    <interactant intactId="EBI-6951">
        <id>P38911</id>
        <label>FPR3</label>
    </interactant>
    <organismsDiffer>false</organismsDiffer>
    <experiments>3</experiments>
</comment>
<comment type="interaction">
    <interactant intactId="EBI-17814">
        <id>P25582</id>
    </interactant>
    <interactant intactId="EBI-6956">
        <id>Q06205</id>
        <label>FPR4</label>
    </interactant>
    <organismsDiffer>false</organismsDiffer>
    <experiments>3</experiments>
</comment>
<comment type="interaction">
    <interactant intactId="EBI-17814">
        <id>P25582</id>
    </interactant>
    <interactant intactId="EBI-22906">
        <id>P43586</id>
        <label>LOC1</label>
    </interactant>
    <organismsDiffer>false</organismsDiffer>
    <experiments>5</experiments>
</comment>
<comment type="interaction">
    <interactant intactId="EBI-17814">
        <id>P25582</id>
    </interactant>
    <interactant intactId="EBI-29259">
        <id>P39744</id>
        <label>NOC2</label>
    </interactant>
    <organismsDiffer>false</organismsDiffer>
    <experiments>3</experiments>
</comment>
<comment type="interaction">
    <interactant intactId="EBI-17814">
        <id>P25582</id>
    </interactant>
    <interactant intactId="EBI-36093">
        <id>Q07896</id>
        <label>NOC3</label>
    </interactant>
    <organismsDiffer>false</organismsDiffer>
    <experiments>4</experiments>
</comment>
<comment type="interaction">
    <interactant intactId="EBI-17814">
        <id>P25582</id>
    </interactant>
    <interactant intactId="EBI-35895">
        <id>Q08208</id>
        <label>NOP12</label>
    </interactant>
    <organismsDiffer>false</organismsDiffer>
    <experiments>3</experiments>
</comment>
<comment type="interaction">
    <interactant intactId="EBI-17814">
        <id>P25582</id>
    </interactant>
    <interactant intactId="EBI-29395">
        <id>Q12080</id>
        <label>NOP53</label>
    </interactant>
    <organismsDiffer>false</organismsDiffer>
    <experiments>4</experiments>
</comment>
<comment type="interaction">
    <interactant intactId="EBI-17814">
        <id>P25582</id>
    </interactant>
    <interactant intactId="EBI-24614">
        <id>P38805</id>
        <label>RPF1</label>
    </interactant>
    <organismsDiffer>false</organismsDiffer>
    <experiments>3</experiments>
</comment>
<comment type="interaction">
    <interactant intactId="EBI-17814">
        <id>P25582</id>
    </interactant>
    <interactant intactId="EBI-15881">
        <id>P36160</id>
        <label>RPF2</label>
    </interactant>
    <organismsDiffer>false</organismsDiffer>
    <experiments>7</experiments>
</comment>
<comment type="interaction">
    <interactant intactId="EBI-17814">
        <id>P25582</id>
    </interactant>
    <interactant intactId="EBI-26762">
        <id>P36080</id>
        <label>RRP14</label>
    </interactant>
    <organismsDiffer>false</organismsDiffer>
    <experiments>3</experiments>
</comment>
<comment type="subcellular location">
    <subcellularLocation>
        <location evidence="1 4">Nucleus</location>
        <location evidence="1 4">Nucleolus</location>
    </subcellularLocation>
</comment>
<comment type="similarity">
    <text evidence="1">Belongs to the class I-like SAM-binding methyltransferase superfamily. RNA methyltransferase RlmE family. SPB1 subfamily.</text>
</comment>
<evidence type="ECO:0000255" key="1">
    <source>
        <dbReference type="HAMAP-Rule" id="MF_03163"/>
    </source>
</evidence>
<evidence type="ECO:0000256" key="2">
    <source>
        <dbReference type="SAM" id="MobiDB-lite"/>
    </source>
</evidence>
<evidence type="ECO:0000269" key="3">
    <source>
    </source>
</evidence>
<evidence type="ECO:0000269" key="4">
    <source>
    </source>
</evidence>
<evidence type="ECO:0000269" key="5">
    <source>
    </source>
</evidence>
<evidence type="ECO:0000269" key="6">
    <source>
    </source>
</evidence>
<evidence type="ECO:0000269" key="7">
    <source>
    </source>
</evidence>
<evidence type="ECO:0007744" key="8">
    <source>
    </source>
</evidence>
<evidence type="ECO:0007744" key="9">
    <source>
    </source>
</evidence>
<evidence type="ECO:0007744" key="10">
    <source>
    </source>
</evidence>
<evidence type="ECO:0007829" key="11">
    <source>
        <dbReference type="PDB" id="7NAD"/>
    </source>
</evidence>
<evidence type="ECO:0007829" key="12">
    <source>
        <dbReference type="PDB" id="7NAF"/>
    </source>
</evidence>
<evidence type="ECO:0007829" key="13">
    <source>
        <dbReference type="PDB" id="7R6K"/>
    </source>
</evidence>
<evidence type="ECO:0007829" key="14">
    <source>
        <dbReference type="PDB" id="7R6Q"/>
    </source>
</evidence>
<evidence type="ECO:0007829" key="15">
    <source>
        <dbReference type="PDB" id="7R7O"/>
    </source>
</evidence>
<name>SPB1_YEAST</name>
<proteinExistence type="evidence at protein level"/>
<gene>
    <name evidence="1" type="primary">SPB1</name>
    <name type="ordered locus">YCL054W</name>
    <name type="ORF">YCL431</name>
    <name type="ORF">YCL54W</name>
</gene>
<protein>
    <recommendedName>
        <fullName>27S pre-rRNA (guanosine(2922)-2'-O)-methyltransferase</fullName>
        <ecNumber>2.1.1.167</ecNumber>
    </recommendedName>
    <alternativeName>
        <fullName evidence="1">2'-O-ribose RNA methyltransferase SPB1</fullName>
    </alternativeName>
    <alternativeName>
        <fullName evidence="1">AdoMet-dependent rRNA methyltransferase SPB1</fullName>
    </alternativeName>
    <alternativeName>
        <fullName evidence="1">S-adenosyl-L-methionine-dependent methyltransferase</fullName>
    </alternativeName>
    <alternativeName>
        <fullName>Suppressor of PAB1 protein 1</fullName>
    </alternativeName>
</protein>
<organism>
    <name type="scientific">Saccharomyces cerevisiae (strain ATCC 204508 / S288c)</name>
    <name type="common">Baker's yeast</name>
    <dbReference type="NCBI Taxonomy" id="559292"/>
    <lineage>
        <taxon>Eukaryota</taxon>
        <taxon>Fungi</taxon>
        <taxon>Dikarya</taxon>
        <taxon>Ascomycota</taxon>
        <taxon>Saccharomycotina</taxon>
        <taxon>Saccharomycetes</taxon>
        <taxon>Saccharomycetales</taxon>
        <taxon>Saccharomycetaceae</taxon>
        <taxon>Saccharomyces</taxon>
    </lineage>
</organism>